<feature type="transit peptide" description="Mitochondrion" evidence="3">
    <location>
        <begin position="1"/>
        <end position="53"/>
    </location>
</feature>
<feature type="chain" id="PRO_0000007212" description="Glutamate dehydrogenase 1, mitochondrial">
    <location>
        <begin position="54"/>
        <end position="558"/>
    </location>
</feature>
<feature type="active site" evidence="5">
    <location>
        <position position="183"/>
    </location>
</feature>
<feature type="binding site" evidence="2">
    <location>
        <begin position="141"/>
        <end position="143"/>
    </location>
    <ligand>
        <name>NAD(+)</name>
        <dbReference type="ChEBI" id="CHEBI:57540"/>
    </ligand>
</feature>
<feature type="binding site" evidence="2">
    <location>
        <position position="147"/>
    </location>
    <ligand>
        <name>substrate</name>
    </ligand>
</feature>
<feature type="binding site" evidence="2">
    <location>
        <position position="171"/>
    </location>
    <ligand>
        <name>substrate</name>
    </ligand>
</feature>
<feature type="binding site" evidence="2">
    <location>
        <position position="176"/>
    </location>
    <ligand>
        <name>NAD(+)</name>
        <dbReference type="ChEBI" id="CHEBI:57540"/>
    </ligand>
</feature>
<feature type="binding site" evidence="2">
    <location>
        <position position="252"/>
    </location>
    <ligand>
        <name>NAD(+)</name>
        <dbReference type="ChEBI" id="CHEBI:57540"/>
    </ligand>
</feature>
<feature type="binding site" evidence="2">
    <location>
        <position position="266"/>
    </location>
    <ligand>
        <name>GTP</name>
        <dbReference type="ChEBI" id="CHEBI:37565"/>
    </ligand>
</feature>
<feature type="binding site" evidence="2">
    <location>
        <position position="270"/>
    </location>
    <ligand>
        <name>GTP</name>
        <dbReference type="ChEBI" id="CHEBI:37565"/>
    </ligand>
</feature>
<feature type="binding site" evidence="2">
    <location>
        <position position="319"/>
    </location>
    <ligand>
        <name>GTP</name>
        <dbReference type="ChEBI" id="CHEBI:37565"/>
    </ligand>
</feature>
<feature type="binding site" evidence="2">
    <location>
        <position position="322"/>
    </location>
    <ligand>
        <name>GTP</name>
        <dbReference type="ChEBI" id="CHEBI:37565"/>
    </ligand>
</feature>
<feature type="binding site" evidence="2">
    <location>
        <position position="438"/>
    </location>
    <ligand>
        <name>substrate</name>
    </ligand>
</feature>
<feature type="binding site" evidence="2">
    <location>
        <position position="444"/>
    </location>
    <ligand>
        <name>NAD(+)</name>
        <dbReference type="ChEBI" id="CHEBI:57540"/>
    </ligand>
</feature>
<feature type="binding site" evidence="2">
    <location>
        <position position="450"/>
    </location>
    <ligand>
        <name>ADP</name>
        <dbReference type="ChEBI" id="CHEBI:456216"/>
    </ligand>
</feature>
<feature type="binding site" evidence="2">
    <location>
        <position position="516"/>
    </location>
    <ligand>
        <name>ADP</name>
        <dbReference type="ChEBI" id="CHEBI:456216"/>
    </ligand>
</feature>
<feature type="modified residue" description="N6-succinyllysine" evidence="14">
    <location>
        <position position="68"/>
    </location>
</feature>
<feature type="modified residue" description="Phosphoserine" evidence="10 12">
    <location>
        <position position="79"/>
    </location>
</feature>
<feature type="modified residue" description="N6-acetyllysine; alternate" evidence="13 14">
    <location>
        <position position="84"/>
    </location>
</feature>
<feature type="modified residue" description="N6-succinyllysine; alternate" evidence="14">
    <location>
        <position position="84"/>
    </location>
</feature>
<feature type="modified residue" description="N6-acetyllysine" evidence="13">
    <location>
        <position position="90"/>
    </location>
</feature>
<feature type="modified residue" description="N6-acetyllysine; alternate" evidence="13">
    <location>
        <position position="110"/>
    </location>
</feature>
<feature type="modified residue" description="N6-succinyllysine; alternate" evidence="2">
    <location>
        <position position="110"/>
    </location>
</feature>
<feature type="modified residue" description="Phosphoserine" evidence="10 12">
    <location>
        <position position="128"/>
    </location>
</feature>
<feature type="modified residue" description="Phosphotyrosine" evidence="11">
    <location>
        <position position="135"/>
    </location>
</feature>
<feature type="modified residue" description="N6-(2-hydroxyisobutyryl)lysine" evidence="3">
    <location>
        <position position="147"/>
    </location>
</feature>
<feature type="modified residue" description="N6-acetyllysine; alternate" evidence="13">
    <location>
        <position position="162"/>
    </location>
</feature>
<feature type="modified residue" description="N6-succinyllysine; alternate" evidence="14">
    <location>
        <position position="162"/>
    </location>
</feature>
<feature type="modified residue" description="N6-acetyllysine" evidence="13">
    <location>
        <position position="171"/>
    </location>
</feature>
<feature type="modified residue" description="ADP-ribosylcysteine" evidence="3">
    <location>
        <position position="172"/>
    </location>
</feature>
<feature type="modified residue" description="N6-acetyllysine; alternate" evidence="2">
    <location>
        <position position="183"/>
    </location>
</feature>
<feature type="modified residue" description="N6-succinyllysine; alternate" evidence="14">
    <location>
        <position position="183"/>
    </location>
</feature>
<feature type="modified residue" description="N6-acetyllysine" evidence="13">
    <location>
        <position position="187"/>
    </location>
</feature>
<feature type="modified residue" description="N6-acetyllysine; alternate" evidence="13">
    <location>
        <position position="191"/>
    </location>
</feature>
<feature type="modified residue" description="N6-succinyllysine; alternate" evidence="14">
    <location>
        <position position="191"/>
    </location>
</feature>
<feature type="modified residue" description="N6-succinyllysine" evidence="14">
    <location>
        <position position="200"/>
    </location>
</feature>
<feature type="modified residue" description="N6-acetyllysine" evidence="13">
    <location>
        <position position="211"/>
    </location>
</feature>
<feature type="modified residue" description="Phosphoserine" evidence="3">
    <location>
        <position position="227"/>
    </location>
</feature>
<feature type="modified residue" description="N6-acetyllysine" evidence="13">
    <location>
        <position position="326"/>
    </location>
</feature>
<feature type="modified residue" description="N6-acetyllysine; alternate" evidence="13">
    <location>
        <position position="346"/>
    </location>
</feature>
<feature type="modified residue" description="N6-succinyllysine; alternate" evidence="14">
    <location>
        <position position="346"/>
    </location>
</feature>
<feature type="modified residue" description="N6-acetyllysine; alternate" evidence="13">
    <location>
        <position position="352"/>
    </location>
</feature>
<feature type="modified residue" description="N6-succinyllysine; alternate" evidence="14">
    <location>
        <position position="352"/>
    </location>
</feature>
<feature type="modified residue" description="N6-acetyllysine; alternate" evidence="13">
    <location>
        <position position="363"/>
    </location>
</feature>
<feature type="modified residue" description="N6-succinyllysine; alternate" evidence="14">
    <location>
        <position position="363"/>
    </location>
</feature>
<feature type="modified residue" description="N6-acetyllysine; alternate" evidence="13">
    <location>
        <position position="365"/>
    </location>
</feature>
<feature type="modified residue" description="N6-succinyllysine; alternate" evidence="14">
    <location>
        <position position="365"/>
    </location>
</feature>
<feature type="modified residue" description="Phosphoserine" evidence="3">
    <location>
        <position position="384"/>
    </location>
</feature>
<feature type="modified residue" description="N6-acetyllysine" evidence="2">
    <location>
        <position position="386"/>
    </location>
</feature>
<feature type="modified residue" description="N6-acetyllysine; alternate" evidence="13">
    <location>
        <position position="390"/>
    </location>
</feature>
<feature type="modified residue" description="N6-succinyllysine; alternate" evidence="14">
    <location>
        <position position="390"/>
    </location>
</feature>
<feature type="modified residue" description="N6-acetyllysine" evidence="13">
    <location>
        <position position="399"/>
    </location>
</feature>
<feature type="modified residue" description="Phosphothreonine" evidence="4">
    <location>
        <position position="410"/>
    </location>
</feature>
<feature type="modified residue" description="N6-acetyllysine; alternate" evidence="13">
    <location>
        <position position="415"/>
    </location>
</feature>
<feature type="modified residue" description="N6-succinyllysine; alternate" evidence="2">
    <location>
        <position position="415"/>
    </location>
</feature>
<feature type="modified residue" description="N6-acetyllysine; alternate" evidence="13">
    <location>
        <position position="457"/>
    </location>
</feature>
<feature type="modified residue" description="N6-malonyllysine; alternate" evidence="1">
    <location>
        <position position="457"/>
    </location>
</feature>
<feature type="modified residue" description="N6-succinyllysine; alternate" evidence="2">
    <location>
        <position position="457"/>
    </location>
</feature>
<feature type="modified residue" description="N6-acetyllysine; alternate" evidence="13">
    <location>
        <position position="477"/>
    </location>
</feature>
<feature type="modified residue" description="N6-succinyllysine; alternate" evidence="14">
    <location>
        <position position="477"/>
    </location>
</feature>
<feature type="modified residue" description="N6-acetyllysine; alternate" evidence="13">
    <location>
        <position position="480"/>
    </location>
</feature>
<feature type="modified residue" description="N6-succinyllysine; alternate" evidence="14">
    <location>
        <position position="480"/>
    </location>
</feature>
<feature type="modified residue" description="N6-acetyllysine; alternate" evidence="13 14">
    <location>
        <position position="503"/>
    </location>
</feature>
<feature type="modified residue" description="N6-malonyllysine; alternate" evidence="1">
    <location>
        <position position="503"/>
    </location>
</feature>
<feature type="modified residue" description="N6-succinyllysine; alternate" evidence="14">
    <location>
        <position position="503"/>
    </location>
</feature>
<feature type="modified residue" description="Phosphotyrosine" evidence="3">
    <location>
        <position position="512"/>
    </location>
</feature>
<feature type="modified residue" description="N6-acetyllysine; alternate" evidence="13 14">
    <location>
        <position position="527"/>
    </location>
</feature>
<feature type="modified residue" description="N6-malonyllysine; alternate" evidence="1">
    <location>
        <position position="527"/>
    </location>
</feature>
<feature type="modified residue" description="N6-succinyllysine; alternate" evidence="14">
    <location>
        <position position="527"/>
    </location>
</feature>
<feature type="modified residue" description="N6-acetyllysine; alternate" evidence="13 14">
    <location>
        <position position="545"/>
    </location>
</feature>
<feature type="modified residue" description="N6-succinyllysine; alternate" evidence="14">
    <location>
        <position position="545"/>
    </location>
</feature>
<feature type="modified residue" description="N6-acetyllysine" evidence="13">
    <location>
        <position position="548"/>
    </location>
</feature>
<feature type="sequence conflict" description="In Ref. 2; BAC40767." evidence="9" ref="2">
    <original>D</original>
    <variation>G</variation>
    <location>
        <position position="495"/>
    </location>
</feature>
<reference key="1">
    <citation type="journal article" date="1991" name="Biochim. Biophys. Acta">
        <title>Molecular cloning, structure and expression analysis of a full-length mouse brain glutamate dehydrogenase cDNA.</title>
        <authorList>
            <person name="Tzimagiorgis G."/>
            <person name="Moschonas N.K."/>
        </authorList>
    </citation>
    <scope>NUCLEOTIDE SEQUENCE [MRNA]</scope>
    <source>
        <strain>BALB/cJ</strain>
        <tissue>Brain</tissue>
    </source>
</reference>
<reference key="2">
    <citation type="journal article" date="2005" name="Science">
        <title>The transcriptional landscape of the mammalian genome.</title>
        <authorList>
            <person name="Carninci P."/>
            <person name="Kasukawa T."/>
            <person name="Katayama S."/>
            <person name="Gough J."/>
            <person name="Frith M.C."/>
            <person name="Maeda N."/>
            <person name="Oyama R."/>
            <person name="Ravasi T."/>
            <person name="Lenhard B."/>
            <person name="Wells C."/>
            <person name="Kodzius R."/>
            <person name="Shimokawa K."/>
            <person name="Bajic V.B."/>
            <person name="Brenner S.E."/>
            <person name="Batalov S."/>
            <person name="Forrest A.R."/>
            <person name="Zavolan M."/>
            <person name="Davis M.J."/>
            <person name="Wilming L.G."/>
            <person name="Aidinis V."/>
            <person name="Allen J.E."/>
            <person name="Ambesi-Impiombato A."/>
            <person name="Apweiler R."/>
            <person name="Aturaliya R.N."/>
            <person name="Bailey T.L."/>
            <person name="Bansal M."/>
            <person name="Baxter L."/>
            <person name="Beisel K.W."/>
            <person name="Bersano T."/>
            <person name="Bono H."/>
            <person name="Chalk A.M."/>
            <person name="Chiu K.P."/>
            <person name="Choudhary V."/>
            <person name="Christoffels A."/>
            <person name="Clutterbuck D.R."/>
            <person name="Crowe M.L."/>
            <person name="Dalla E."/>
            <person name="Dalrymple B.P."/>
            <person name="de Bono B."/>
            <person name="Della Gatta G."/>
            <person name="di Bernardo D."/>
            <person name="Down T."/>
            <person name="Engstrom P."/>
            <person name="Fagiolini M."/>
            <person name="Faulkner G."/>
            <person name="Fletcher C.F."/>
            <person name="Fukushima T."/>
            <person name="Furuno M."/>
            <person name="Futaki S."/>
            <person name="Gariboldi M."/>
            <person name="Georgii-Hemming P."/>
            <person name="Gingeras T.R."/>
            <person name="Gojobori T."/>
            <person name="Green R.E."/>
            <person name="Gustincich S."/>
            <person name="Harbers M."/>
            <person name="Hayashi Y."/>
            <person name="Hensch T.K."/>
            <person name="Hirokawa N."/>
            <person name="Hill D."/>
            <person name="Huminiecki L."/>
            <person name="Iacono M."/>
            <person name="Ikeo K."/>
            <person name="Iwama A."/>
            <person name="Ishikawa T."/>
            <person name="Jakt M."/>
            <person name="Kanapin A."/>
            <person name="Katoh M."/>
            <person name="Kawasawa Y."/>
            <person name="Kelso J."/>
            <person name="Kitamura H."/>
            <person name="Kitano H."/>
            <person name="Kollias G."/>
            <person name="Krishnan S.P."/>
            <person name="Kruger A."/>
            <person name="Kummerfeld S.K."/>
            <person name="Kurochkin I.V."/>
            <person name="Lareau L.F."/>
            <person name="Lazarevic D."/>
            <person name="Lipovich L."/>
            <person name="Liu J."/>
            <person name="Liuni S."/>
            <person name="McWilliam S."/>
            <person name="Madan Babu M."/>
            <person name="Madera M."/>
            <person name="Marchionni L."/>
            <person name="Matsuda H."/>
            <person name="Matsuzawa S."/>
            <person name="Miki H."/>
            <person name="Mignone F."/>
            <person name="Miyake S."/>
            <person name="Morris K."/>
            <person name="Mottagui-Tabar S."/>
            <person name="Mulder N."/>
            <person name="Nakano N."/>
            <person name="Nakauchi H."/>
            <person name="Ng P."/>
            <person name="Nilsson R."/>
            <person name="Nishiguchi S."/>
            <person name="Nishikawa S."/>
            <person name="Nori F."/>
            <person name="Ohara O."/>
            <person name="Okazaki Y."/>
            <person name="Orlando V."/>
            <person name="Pang K.C."/>
            <person name="Pavan W.J."/>
            <person name="Pavesi G."/>
            <person name="Pesole G."/>
            <person name="Petrovsky N."/>
            <person name="Piazza S."/>
            <person name="Reed J."/>
            <person name="Reid J.F."/>
            <person name="Ring B.Z."/>
            <person name="Ringwald M."/>
            <person name="Rost B."/>
            <person name="Ruan Y."/>
            <person name="Salzberg S.L."/>
            <person name="Sandelin A."/>
            <person name="Schneider C."/>
            <person name="Schoenbach C."/>
            <person name="Sekiguchi K."/>
            <person name="Semple C.A."/>
            <person name="Seno S."/>
            <person name="Sessa L."/>
            <person name="Sheng Y."/>
            <person name="Shibata Y."/>
            <person name="Shimada H."/>
            <person name="Shimada K."/>
            <person name="Silva D."/>
            <person name="Sinclair B."/>
            <person name="Sperling S."/>
            <person name="Stupka E."/>
            <person name="Sugiura K."/>
            <person name="Sultana R."/>
            <person name="Takenaka Y."/>
            <person name="Taki K."/>
            <person name="Tammoja K."/>
            <person name="Tan S.L."/>
            <person name="Tang S."/>
            <person name="Taylor M.S."/>
            <person name="Tegner J."/>
            <person name="Teichmann S.A."/>
            <person name="Ueda H.R."/>
            <person name="van Nimwegen E."/>
            <person name="Verardo R."/>
            <person name="Wei C.L."/>
            <person name="Yagi K."/>
            <person name="Yamanishi H."/>
            <person name="Zabarovsky E."/>
            <person name="Zhu S."/>
            <person name="Zimmer A."/>
            <person name="Hide W."/>
            <person name="Bult C."/>
            <person name="Grimmond S.M."/>
            <person name="Teasdale R.D."/>
            <person name="Liu E.T."/>
            <person name="Brusic V."/>
            <person name="Quackenbush J."/>
            <person name="Wahlestedt C."/>
            <person name="Mattick J.S."/>
            <person name="Hume D.A."/>
            <person name="Kai C."/>
            <person name="Sasaki D."/>
            <person name="Tomaru Y."/>
            <person name="Fukuda S."/>
            <person name="Kanamori-Katayama M."/>
            <person name="Suzuki M."/>
            <person name="Aoki J."/>
            <person name="Arakawa T."/>
            <person name="Iida J."/>
            <person name="Imamura K."/>
            <person name="Itoh M."/>
            <person name="Kato T."/>
            <person name="Kawaji H."/>
            <person name="Kawagashira N."/>
            <person name="Kawashima T."/>
            <person name="Kojima M."/>
            <person name="Kondo S."/>
            <person name="Konno H."/>
            <person name="Nakano K."/>
            <person name="Ninomiya N."/>
            <person name="Nishio T."/>
            <person name="Okada M."/>
            <person name="Plessy C."/>
            <person name="Shibata K."/>
            <person name="Shiraki T."/>
            <person name="Suzuki S."/>
            <person name="Tagami M."/>
            <person name="Waki K."/>
            <person name="Watahiki A."/>
            <person name="Okamura-Oho Y."/>
            <person name="Suzuki H."/>
            <person name="Kawai J."/>
            <person name="Hayashizaki Y."/>
        </authorList>
    </citation>
    <scope>NUCLEOTIDE SEQUENCE [LARGE SCALE MRNA]</scope>
    <source>
        <strain>C57BL/6J</strain>
        <tissue>Olfactory bulb</tissue>
    </source>
</reference>
<reference key="3">
    <citation type="journal article" date="2004" name="Genome Res.">
        <title>The status, quality, and expansion of the NIH full-length cDNA project: the Mammalian Gene Collection (MGC).</title>
        <authorList>
            <consortium name="The MGC Project Team"/>
        </authorList>
    </citation>
    <scope>NUCLEOTIDE SEQUENCE [LARGE SCALE MRNA]</scope>
    <source>
        <strain>C57BL/6J</strain>
        <tissue>Brain</tissue>
    </source>
</reference>
<reference key="4">
    <citation type="submission" date="2009-01" db="UniProtKB">
        <authorList>
            <person name="Lubec G."/>
            <person name="Klug S."/>
            <person name="Kang S.U."/>
            <person name="Sunyer B."/>
            <person name="Chen W.-Q."/>
        </authorList>
    </citation>
    <scope>PROTEIN SEQUENCE OF 61-76; 108-123; 125-136; 152-183; 192-200; 212-231; 275-318; 327-346; 353-363; 366-386; 400-420; 461-476; 481-496; 504-516; 528-545 AND 549-558</scope>
    <source>
        <strain>C57BL/6J</strain>
        <strain>OF1</strain>
        <tissue>Brain</tissue>
        <tissue>Hippocampus</tissue>
    </source>
</reference>
<reference key="5">
    <citation type="journal article" date="2006" name="Cell">
        <title>SIRT4 inhibits glutamate dehydrogenase and opposes the effects of calorie restriction in pancreatic beta cells.</title>
        <authorList>
            <person name="Haigis M.C."/>
            <person name="Mostoslavsky R."/>
            <person name="Haigis K.M."/>
            <person name="Fahie K."/>
            <person name="Christodoulou D.C."/>
            <person name="Murphy A.J."/>
            <person name="Valenzuela D.M."/>
            <person name="Yancopoulos G.D."/>
            <person name="Karow M."/>
            <person name="Blander G."/>
            <person name="Wolberger C."/>
            <person name="Prolla T.A."/>
            <person name="Weindruch R."/>
            <person name="Alt F.W."/>
            <person name="Guarente L."/>
        </authorList>
    </citation>
    <scope>ADP-RIBOSYLATION</scope>
    <scope>FUNCTION</scope>
</reference>
<reference key="6">
    <citation type="journal article" date="2007" name="Proc. Natl. Acad. Sci. U.S.A.">
        <title>Large-scale phosphorylation analysis of mouse liver.</title>
        <authorList>
            <person name="Villen J."/>
            <person name="Beausoleil S.A."/>
            <person name="Gerber S.A."/>
            <person name="Gygi S.P."/>
        </authorList>
    </citation>
    <scope>PHOSPHORYLATION [LARGE SCALE ANALYSIS] AT SER-79 AND SER-128</scope>
    <scope>IDENTIFICATION BY MASS SPECTROMETRY [LARGE SCALE ANALYSIS]</scope>
    <source>
        <tissue>Liver</tissue>
    </source>
</reference>
<reference key="7">
    <citation type="journal article" date="2008" name="J. Proteome Res.">
        <title>Large-scale identification and evolution indexing of tyrosine phosphorylation sites from murine brain.</title>
        <authorList>
            <person name="Ballif B.A."/>
            <person name="Carey G.R."/>
            <person name="Sunyaev S.R."/>
            <person name="Gygi S.P."/>
        </authorList>
    </citation>
    <scope>PHOSPHORYLATION [LARGE SCALE ANALYSIS] AT TYR-135</scope>
    <scope>IDENTIFICATION BY MASS SPECTROMETRY [LARGE SCALE ANALYSIS]</scope>
    <source>
        <tissue>Brain</tissue>
    </source>
</reference>
<reference key="8">
    <citation type="journal article" date="2010" name="Cell">
        <title>A tissue-specific atlas of mouse protein phosphorylation and expression.</title>
        <authorList>
            <person name="Huttlin E.L."/>
            <person name="Jedrychowski M.P."/>
            <person name="Elias J.E."/>
            <person name="Goswami T."/>
            <person name="Rad R."/>
            <person name="Beausoleil S.A."/>
            <person name="Villen J."/>
            <person name="Haas W."/>
            <person name="Sowa M.E."/>
            <person name="Gygi S.P."/>
        </authorList>
    </citation>
    <scope>PHOSPHORYLATION [LARGE SCALE ANALYSIS] AT SER-79 AND SER-128</scope>
    <scope>IDENTIFICATION BY MASS SPECTROMETRY [LARGE SCALE ANALYSIS]</scope>
    <source>
        <tissue>Brain</tissue>
        <tissue>Brown adipose tissue</tissue>
        <tissue>Heart</tissue>
        <tissue>Kidney</tissue>
        <tissue>Liver</tissue>
        <tissue>Lung</tissue>
        <tissue>Pancreas</tissue>
        <tissue>Spleen</tissue>
        <tissue>Testis</tissue>
    </source>
</reference>
<reference key="9">
    <citation type="journal article" date="2010" name="J. Biol. Chem.">
        <title>Mechanism of hyperinsulinism in short-chain 3-hydroxyacyl-CoA dehydrogenase deficiency involves activation of glutamate dehydrogenase.</title>
        <authorList>
            <person name="Li C."/>
            <person name="Chen P."/>
            <person name="Palladino A."/>
            <person name="Narayan S."/>
            <person name="Russell L.K."/>
            <person name="Sayed S."/>
            <person name="Xiong G."/>
            <person name="Chen J."/>
            <person name="Stokes D."/>
            <person name="Butt Y.M."/>
            <person name="Jones P.M."/>
            <person name="Collins H.W."/>
            <person name="Cohen N.A."/>
            <person name="Cohen A.S."/>
            <person name="Nissim I."/>
            <person name="Smith T.J."/>
            <person name="Strauss A.W."/>
            <person name="Matschinsky F.M."/>
            <person name="Bennett M.J."/>
            <person name="Stanley C.A."/>
        </authorList>
    </citation>
    <scope>INTERACTION WITH HADH</scope>
    <scope>ACTIVITY REGULATION</scope>
    <scope>CATALYTIC ACTIVITY</scope>
    <scope>FUNCTION</scope>
    <scope>BIOPHYSICOCHEMICAL PROPERTIES</scope>
</reference>
<reference key="10">
    <citation type="journal article" date="2013" name="Cell">
        <title>The mTORC1 pathway stimulates glutamine metabolism and cell proliferation by repressing SIRT4.</title>
        <authorList>
            <person name="Csibi A."/>
            <person name="Fendt S.M."/>
            <person name="Li C."/>
            <person name="Poulogiannis G."/>
            <person name="Choo A.Y."/>
            <person name="Chapski D.J."/>
            <person name="Jeong S.M."/>
            <person name="Dempsey J.M."/>
            <person name="Parkhitko A."/>
            <person name="Morrison T."/>
            <person name="Henske E.P."/>
            <person name="Haigis M.C."/>
            <person name="Cantley L.C."/>
            <person name="Stephanopoulos G."/>
            <person name="Yu J."/>
            <person name="Blenis J."/>
        </authorList>
    </citation>
    <scope>FUNCTION</scope>
    <scope>ADP-RIBOSYLATION</scope>
</reference>
<reference key="11">
    <citation type="journal article" date="2013" name="Mol. Cell">
        <title>SIRT5-mediated lysine desuccinylation impacts diverse metabolic pathways.</title>
        <authorList>
            <person name="Park J."/>
            <person name="Chen Y."/>
            <person name="Tishkoff D.X."/>
            <person name="Peng C."/>
            <person name="Tan M."/>
            <person name="Dai L."/>
            <person name="Xie Z."/>
            <person name="Zhang Y."/>
            <person name="Zwaans B.M."/>
            <person name="Skinner M.E."/>
            <person name="Lombard D.B."/>
            <person name="Zhao Y."/>
        </authorList>
    </citation>
    <scope>ACETYLATION [LARGE SCALE ANALYSIS] AT LYS-84; LYS-503; LYS-527 AND LYS-545</scope>
    <scope>SUCCINYLATION [LARGE SCALE ANALYSIS] AT LYS-68; LYS-84; LYS-162; LYS-183; LYS-191; LYS-200; LYS-346; LYS-352; LYS-363; LYS-365; LYS-390; LYS-477; LYS-480; LYS-503; LYS-527 AND LYS-545</scope>
    <scope>IDENTIFICATION BY MASS SPECTROMETRY [LARGE SCALE ANALYSIS]</scope>
    <source>
        <tissue>Embryonic fibroblast</tissue>
        <tissue>Liver</tissue>
    </source>
</reference>
<reference key="12">
    <citation type="journal article" date="2013" name="Proc. Natl. Acad. Sci. U.S.A.">
        <title>Label-free quantitative proteomics of the lysine acetylome in mitochondria identifies substrates of SIRT3 in metabolic pathways.</title>
        <authorList>
            <person name="Rardin M.J."/>
            <person name="Newman J.C."/>
            <person name="Held J.M."/>
            <person name="Cusack M.P."/>
            <person name="Sorensen D.J."/>
            <person name="Li B."/>
            <person name="Schilling B."/>
            <person name="Mooney S.D."/>
            <person name="Kahn C.R."/>
            <person name="Verdin E."/>
            <person name="Gibson B.W."/>
        </authorList>
    </citation>
    <scope>ACETYLATION [LARGE SCALE ANALYSIS] AT LYS-84; LYS-90; LYS-110; LYS-162; LYS-171; LYS-187; LYS-191; LYS-211; LYS-326; LYS-346; LYS-352; LYS-363; LYS-365; LYS-390; LYS-399; LYS-415; LYS-457; LYS-477; LYS-480; LYS-503; LYS-527; LYS-545 AND LYS-548</scope>
    <scope>IDENTIFICATION BY MASS SPECTROMETRY [LARGE SCALE ANALYSIS]</scope>
    <source>
        <tissue>Liver</tissue>
    </source>
</reference>
<evidence type="ECO:0000250" key="1"/>
<evidence type="ECO:0000250" key="2">
    <source>
        <dbReference type="UniProtKB" id="P00366"/>
    </source>
</evidence>
<evidence type="ECO:0000250" key="3">
    <source>
        <dbReference type="UniProtKB" id="P00367"/>
    </source>
</evidence>
<evidence type="ECO:0000250" key="4">
    <source>
        <dbReference type="UniProtKB" id="P10860"/>
    </source>
</evidence>
<evidence type="ECO:0000255" key="5">
    <source>
        <dbReference type="PROSITE-ProRule" id="PRU10011"/>
    </source>
</evidence>
<evidence type="ECO:0000269" key="6">
    <source>
    </source>
</evidence>
<evidence type="ECO:0000269" key="7">
    <source>
    </source>
</evidence>
<evidence type="ECO:0000269" key="8">
    <source>
    </source>
</evidence>
<evidence type="ECO:0000305" key="9"/>
<evidence type="ECO:0007744" key="10">
    <source>
    </source>
</evidence>
<evidence type="ECO:0007744" key="11">
    <source>
    </source>
</evidence>
<evidence type="ECO:0007744" key="12">
    <source>
    </source>
</evidence>
<evidence type="ECO:0007744" key="13">
    <source>
    </source>
</evidence>
<evidence type="ECO:0007744" key="14">
    <source>
    </source>
</evidence>
<proteinExistence type="evidence at protein level"/>
<accession>P26443</accession>
<accession>Q8C273</accession>
<sequence length="558" mass="61337">MYRRLGEALLLSRAGPAALGSAAADSAALLGWARGQPSAAPQPGLTPVARRHYSEAAADREDDPNFFKMVEGFFDRGASIVEDKLVEDLKTRESEEQKRNRVRGILRIIKPCNHVLSLSFPIRRDDGSWEVIEGYRAQHSQHRTPCKGGIRYSTDVSVDEVKALASLMTYKCAVVDVPFGGAKAGVKINPKNYTDNELEKITRRFTMELAKKGFIGPGIDVPAPDMSTGEREMSWIADTYASTIGHYDINAHACVTGKPISQGGIHGRISATGRGVFHGIENFINEASYMSILGMTPGFGDKTFVVQGFGNVGLHSMRYLHRFGAKCVGVGESDGSIWNPDGIDPKELEDFKLQHGSILGFPKAKVYEGSILEADCDILIPAASEKQLTKSNAPRVKAKIIAEGANGPTTPEADKIFLERNIMVIPDLYLNAGGVTVSYFEWLKNLNHVSYGRLTFKYERDSNYHLLMSVQESLERKFGKHGGTIPVVPTAEFQDRISGASEKDIVHSGLAYTMERSARQIMRTAMKYNLGLDLRTAAYVNAIEKVFKVYNEAGVTFT</sequence>
<dbReference type="EC" id="1.4.1.3" evidence="7"/>
<dbReference type="EMBL" id="X57024">
    <property type="protein sequence ID" value="CAA40341.1"/>
    <property type="molecule type" value="mRNA"/>
</dbReference>
<dbReference type="EMBL" id="AK089152">
    <property type="protein sequence ID" value="BAC40767.1"/>
    <property type="molecule type" value="mRNA"/>
</dbReference>
<dbReference type="EMBL" id="BC052724">
    <property type="protein sequence ID" value="AAH52724.1"/>
    <property type="molecule type" value="mRNA"/>
</dbReference>
<dbReference type="EMBL" id="BC057347">
    <property type="protein sequence ID" value="AAH57347.1"/>
    <property type="molecule type" value="mRNA"/>
</dbReference>
<dbReference type="CCDS" id="CCDS26935.1"/>
<dbReference type="PIR" id="S16239">
    <property type="entry name" value="S16239"/>
</dbReference>
<dbReference type="RefSeq" id="NP_032159.1">
    <property type="nucleotide sequence ID" value="NM_008133.4"/>
</dbReference>
<dbReference type="SMR" id="P26443"/>
<dbReference type="BioGRID" id="199956">
    <property type="interactions" value="26"/>
</dbReference>
<dbReference type="FunCoup" id="P26443">
    <property type="interactions" value="2468"/>
</dbReference>
<dbReference type="IntAct" id="P26443">
    <property type="interactions" value="11"/>
</dbReference>
<dbReference type="MINT" id="P26443"/>
<dbReference type="STRING" id="10090.ENSMUSP00000022322"/>
<dbReference type="GlyGen" id="P26443">
    <property type="glycosylation" value="4 sites, 1 N-linked glycan (1 site), 1 O-linked glycan (1 site)"/>
</dbReference>
<dbReference type="iPTMnet" id="P26443"/>
<dbReference type="MetOSite" id="P26443"/>
<dbReference type="PhosphoSitePlus" id="P26443"/>
<dbReference type="SwissPalm" id="P26443"/>
<dbReference type="REPRODUCTION-2DPAGE" id="P26443"/>
<dbReference type="CPTAC" id="non-CPTAC-3785"/>
<dbReference type="jPOST" id="P26443"/>
<dbReference type="PaxDb" id="10090-ENSMUSP00000022322"/>
<dbReference type="PeptideAtlas" id="P26443"/>
<dbReference type="ProteomicsDB" id="277333"/>
<dbReference type="Pumba" id="P26443"/>
<dbReference type="DNASU" id="14661"/>
<dbReference type="Ensembl" id="ENSMUST00000022322.17">
    <property type="protein sequence ID" value="ENSMUSP00000022322.10"/>
    <property type="gene ID" value="ENSMUSG00000021794.17"/>
</dbReference>
<dbReference type="GeneID" id="14661"/>
<dbReference type="KEGG" id="mmu:14661"/>
<dbReference type="UCSC" id="uc007tas.2">
    <property type="organism name" value="mouse"/>
</dbReference>
<dbReference type="AGR" id="MGI:95753"/>
<dbReference type="CTD" id="2746"/>
<dbReference type="MGI" id="MGI:95753">
    <property type="gene designation" value="Glud1"/>
</dbReference>
<dbReference type="VEuPathDB" id="HostDB:ENSMUSG00000021794"/>
<dbReference type="eggNOG" id="KOG2250">
    <property type="taxonomic scope" value="Eukaryota"/>
</dbReference>
<dbReference type="GeneTree" id="ENSGT00390000000854"/>
<dbReference type="HOGENOM" id="CLU_025763_1_0_1"/>
<dbReference type="InParanoid" id="P26443"/>
<dbReference type="OMA" id="MIMGWMM"/>
<dbReference type="OrthoDB" id="6718861at2759"/>
<dbReference type="PhylomeDB" id="P26443"/>
<dbReference type="TreeFam" id="TF313945"/>
<dbReference type="BRENDA" id="1.4.1.3">
    <property type="organism ID" value="3474"/>
</dbReference>
<dbReference type="Reactome" id="R-MMU-2151201">
    <property type="pathway name" value="Transcriptional activation of mitochondrial biogenesis"/>
</dbReference>
<dbReference type="Reactome" id="R-MMU-8964539">
    <property type="pathway name" value="Glutamate and glutamine metabolism"/>
</dbReference>
<dbReference type="Reactome" id="R-MMU-9837999">
    <property type="pathway name" value="Mitochondrial protein degradation"/>
</dbReference>
<dbReference type="BioGRID-ORCS" id="14661">
    <property type="hits" value="2 hits in 78 CRISPR screens"/>
</dbReference>
<dbReference type="CD-CODE" id="CE726F99">
    <property type="entry name" value="Postsynaptic density"/>
</dbReference>
<dbReference type="ChiTaRS" id="Glud1">
    <property type="organism name" value="mouse"/>
</dbReference>
<dbReference type="PRO" id="PR:P26443"/>
<dbReference type="Proteomes" id="UP000000589">
    <property type="component" value="Chromosome 14"/>
</dbReference>
<dbReference type="RNAct" id="P26443">
    <property type="molecule type" value="protein"/>
</dbReference>
<dbReference type="Bgee" id="ENSMUSG00000021794">
    <property type="expression patterns" value="Expressed in left lobe of liver and 280 other cell types or tissues"/>
</dbReference>
<dbReference type="ExpressionAtlas" id="P26443">
    <property type="expression patterns" value="baseline and differential"/>
</dbReference>
<dbReference type="GO" id="GO:0005783">
    <property type="term" value="C:endoplasmic reticulum"/>
    <property type="evidence" value="ECO:0000250"/>
    <property type="project" value="UniProtKB"/>
</dbReference>
<dbReference type="GO" id="GO:0005743">
    <property type="term" value="C:mitochondrial inner membrane"/>
    <property type="evidence" value="ECO:0007005"/>
    <property type="project" value="MGI"/>
</dbReference>
<dbReference type="GO" id="GO:0005759">
    <property type="term" value="C:mitochondrial matrix"/>
    <property type="evidence" value="ECO:0000314"/>
    <property type="project" value="MGI"/>
</dbReference>
<dbReference type="GO" id="GO:0005739">
    <property type="term" value="C:mitochondrion"/>
    <property type="evidence" value="ECO:0000314"/>
    <property type="project" value="MGI"/>
</dbReference>
<dbReference type="GO" id="GO:0005524">
    <property type="term" value="F:ATP binding"/>
    <property type="evidence" value="ECO:0007669"/>
    <property type="project" value="UniProtKB-KW"/>
</dbReference>
<dbReference type="GO" id="GO:0004352">
    <property type="term" value="F:glutamate dehydrogenase (NAD+) activity"/>
    <property type="evidence" value="ECO:0000314"/>
    <property type="project" value="UniProtKB"/>
</dbReference>
<dbReference type="GO" id="GO:0004354">
    <property type="term" value="F:glutamate dehydrogenase (NADP+) activity"/>
    <property type="evidence" value="ECO:0007669"/>
    <property type="project" value="RHEA"/>
</dbReference>
<dbReference type="GO" id="GO:0004353">
    <property type="term" value="F:glutamate dehydrogenase [NAD(P)+] activity"/>
    <property type="evidence" value="ECO:0000314"/>
    <property type="project" value="UniProtKB"/>
</dbReference>
<dbReference type="GO" id="GO:0005525">
    <property type="term" value="F:GTP binding"/>
    <property type="evidence" value="ECO:0007669"/>
    <property type="project" value="UniProtKB-KW"/>
</dbReference>
<dbReference type="GO" id="GO:0006541">
    <property type="term" value="P:glutamine metabolic process"/>
    <property type="evidence" value="ECO:0000315"/>
    <property type="project" value="UniProtKB"/>
</dbReference>
<dbReference type="GO" id="GO:0032024">
    <property type="term" value="P:positive regulation of insulin secretion"/>
    <property type="evidence" value="ECO:0000316"/>
    <property type="project" value="MGI"/>
</dbReference>
<dbReference type="GO" id="GO:0072350">
    <property type="term" value="P:tricarboxylic acid metabolic process"/>
    <property type="evidence" value="ECO:0000315"/>
    <property type="project" value="UniProtKB"/>
</dbReference>
<dbReference type="CDD" id="cd01076">
    <property type="entry name" value="NAD_bind_1_Glu_DH"/>
    <property type="match status" value="1"/>
</dbReference>
<dbReference type="FunFam" id="1.10.287.140:FF:000001">
    <property type="entry name" value="Glutamate dehydrogenase 1, mitochondrial"/>
    <property type="match status" value="1"/>
</dbReference>
<dbReference type="FunFam" id="3.40.50.10860:FF:000007">
    <property type="entry name" value="Glutamate dehydrogenase 1, mitochondrial"/>
    <property type="match status" value="1"/>
</dbReference>
<dbReference type="FunFam" id="3.40.50.720:FF:000100">
    <property type="entry name" value="Glutamate dehydrogenase 1, mitochondrial"/>
    <property type="match status" value="1"/>
</dbReference>
<dbReference type="Gene3D" id="1.10.287.140">
    <property type="match status" value="1"/>
</dbReference>
<dbReference type="Gene3D" id="3.40.50.10860">
    <property type="entry name" value="Leucine Dehydrogenase, chain A, domain 1"/>
    <property type="match status" value="1"/>
</dbReference>
<dbReference type="Gene3D" id="3.40.50.720">
    <property type="entry name" value="NAD(P)-binding Rossmann-like Domain"/>
    <property type="match status" value="1"/>
</dbReference>
<dbReference type="InterPro" id="IPR046346">
    <property type="entry name" value="Aminoacid_DH-like_N_sf"/>
</dbReference>
<dbReference type="InterPro" id="IPR006095">
    <property type="entry name" value="Glu/Leu/Phe/Val/Trp_DH"/>
</dbReference>
<dbReference type="InterPro" id="IPR006096">
    <property type="entry name" value="Glu/Leu/Phe/Val/Trp_DH_C"/>
</dbReference>
<dbReference type="InterPro" id="IPR006097">
    <property type="entry name" value="Glu/Leu/Phe/Val/Trp_DH_dimer"/>
</dbReference>
<dbReference type="InterPro" id="IPR033524">
    <property type="entry name" value="Glu/Leu/Phe/Val_DH_AS"/>
</dbReference>
<dbReference type="InterPro" id="IPR036291">
    <property type="entry name" value="NAD(P)-bd_dom_sf"/>
</dbReference>
<dbReference type="InterPro" id="IPR033922">
    <property type="entry name" value="NAD_bind_Glu_DH"/>
</dbReference>
<dbReference type="PANTHER" id="PTHR11606">
    <property type="entry name" value="GLUTAMATE DEHYDROGENASE"/>
    <property type="match status" value="1"/>
</dbReference>
<dbReference type="PANTHER" id="PTHR11606:SF13">
    <property type="entry name" value="GLUTAMATE DEHYDROGENASE 1, MITOCHONDRIAL"/>
    <property type="match status" value="1"/>
</dbReference>
<dbReference type="Pfam" id="PF00208">
    <property type="entry name" value="ELFV_dehydrog"/>
    <property type="match status" value="1"/>
</dbReference>
<dbReference type="Pfam" id="PF02812">
    <property type="entry name" value="ELFV_dehydrog_N"/>
    <property type="match status" value="1"/>
</dbReference>
<dbReference type="PRINTS" id="PR00082">
    <property type="entry name" value="GLFDHDRGNASE"/>
</dbReference>
<dbReference type="SMART" id="SM00839">
    <property type="entry name" value="ELFV_dehydrog"/>
    <property type="match status" value="1"/>
</dbReference>
<dbReference type="SUPFAM" id="SSF53223">
    <property type="entry name" value="Aminoacid dehydrogenase-like, N-terminal domain"/>
    <property type="match status" value="1"/>
</dbReference>
<dbReference type="SUPFAM" id="SSF51735">
    <property type="entry name" value="NAD(P)-binding Rossmann-fold domains"/>
    <property type="match status" value="1"/>
</dbReference>
<dbReference type="PROSITE" id="PS00074">
    <property type="entry name" value="GLFV_DEHYDROGENASE"/>
    <property type="match status" value="1"/>
</dbReference>
<name>DHE3_MOUSE</name>
<gene>
    <name type="primary">Glud1</name>
    <name type="synonym">Glud</name>
</gene>
<organism>
    <name type="scientific">Mus musculus</name>
    <name type="common">Mouse</name>
    <dbReference type="NCBI Taxonomy" id="10090"/>
    <lineage>
        <taxon>Eukaryota</taxon>
        <taxon>Metazoa</taxon>
        <taxon>Chordata</taxon>
        <taxon>Craniata</taxon>
        <taxon>Vertebrata</taxon>
        <taxon>Euteleostomi</taxon>
        <taxon>Mammalia</taxon>
        <taxon>Eutheria</taxon>
        <taxon>Euarchontoglires</taxon>
        <taxon>Glires</taxon>
        <taxon>Rodentia</taxon>
        <taxon>Myomorpha</taxon>
        <taxon>Muroidea</taxon>
        <taxon>Muridae</taxon>
        <taxon>Murinae</taxon>
        <taxon>Mus</taxon>
        <taxon>Mus</taxon>
    </lineage>
</organism>
<keyword id="KW-0007">Acetylation</keyword>
<keyword id="KW-0013">ADP-ribosylation</keyword>
<keyword id="KW-0067">ATP-binding</keyword>
<keyword id="KW-0903">Direct protein sequencing</keyword>
<keyword id="KW-0256">Endoplasmic reticulum</keyword>
<keyword id="KW-0342">GTP-binding</keyword>
<keyword id="KW-0379">Hydroxylation</keyword>
<keyword id="KW-0496">Mitochondrion</keyword>
<keyword id="KW-0521">NADP</keyword>
<keyword id="KW-0547">Nucleotide-binding</keyword>
<keyword id="KW-0560">Oxidoreductase</keyword>
<keyword id="KW-0597">Phosphoprotein</keyword>
<keyword id="KW-1185">Reference proteome</keyword>
<keyword id="KW-0809">Transit peptide</keyword>
<comment type="function">
    <text evidence="3 4 6 7 8">Mitochondrial glutamate dehydrogenase that converts L-glutamate into alpha-ketoglutarate (PubMed:20670938). Plays a key role in glutamine anaplerosis by producing alpha-ketoglutarate, an important intermediate in the tricarboxylic acid cycle (By similarity). Plays a role in insulin homeostasis (PubMed:16959573). May be involved in learning and memory reactions by increasing the turnover of the excitatory neurotransmitter glutamate (By similarity).</text>
</comment>
<comment type="catalytic activity">
    <reaction evidence="7">
        <text>L-glutamate + NAD(+) + H2O = 2-oxoglutarate + NH4(+) + NADH + H(+)</text>
        <dbReference type="Rhea" id="RHEA:15133"/>
        <dbReference type="ChEBI" id="CHEBI:15377"/>
        <dbReference type="ChEBI" id="CHEBI:15378"/>
        <dbReference type="ChEBI" id="CHEBI:16810"/>
        <dbReference type="ChEBI" id="CHEBI:28938"/>
        <dbReference type="ChEBI" id="CHEBI:29985"/>
        <dbReference type="ChEBI" id="CHEBI:57540"/>
        <dbReference type="ChEBI" id="CHEBI:57945"/>
        <dbReference type="EC" id="1.4.1.3"/>
    </reaction>
</comment>
<comment type="catalytic activity">
    <reaction evidence="3">
        <text>L-glutamate + NADP(+) + H2O = 2-oxoglutarate + NH4(+) + NADPH + H(+)</text>
        <dbReference type="Rhea" id="RHEA:11612"/>
        <dbReference type="ChEBI" id="CHEBI:15377"/>
        <dbReference type="ChEBI" id="CHEBI:15378"/>
        <dbReference type="ChEBI" id="CHEBI:16810"/>
        <dbReference type="ChEBI" id="CHEBI:28938"/>
        <dbReference type="ChEBI" id="CHEBI:29985"/>
        <dbReference type="ChEBI" id="CHEBI:57783"/>
        <dbReference type="ChEBI" id="CHEBI:58349"/>
        <dbReference type="EC" id="1.4.1.3"/>
    </reaction>
</comment>
<comment type="activity regulation">
    <text evidence="3 7">Subject to allosteric regulation. Activated by ADP. Inhibited by GTP and ATP. ADP can occupy the NADH binding site and activate the enzyme. Inhibited by SIRT4 (By similarity). Inhibited by HADH (PubMed:20670938).</text>
</comment>
<comment type="biophysicochemical properties">
    <kinetics>
        <KM evidence="7">107 uM for 2-oxoglutarate</KM>
    </kinetics>
</comment>
<comment type="subunit">
    <text evidence="2 7">Homohexamer (By similarity). Interacts with HADH; this interaction inhibits the activation of GLUD1 (PubMed:20670938).</text>
</comment>
<comment type="subcellular location">
    <subcellularLocation>
        <location evidence="3">Mitochondrion</location>
    </subcellularLocation>
    <subcellularLocation>
        <location evidence="3">Endoplasmic reticulum</location>
    </subcellularLocation>
    <text evidence="3">Mostly translocates into the mitochondria, only a small amount of the protein localizes to the endoplasmic reticulum.</text>
</comment>
<comment type="PTM">
    <text>Acetylation of Lys-84 is observed in liver mitochondria from fasted mice but not from fed mice.</text>
</comment>
<comment type="PTM">
    <text evidence="3 6">ADP-ribosylated by SIRT4, leading to inactivate glutamate dehydrogenase activity (PubMed:16959573). Stoichiometry shows that ADP-ribosylation occurs in one subunit per catalytically active homohexamer (By similarity).</text>
</comment>
<comment type="similarity">
    <text evidence="9">Belongs to the Glu/Leu/Phe/Val dehydrogenases family.</text>
</comment>
<protein>
    <recommendedName>
        <fullName>Glutamate dehydrogenase 1, mitochondrial</fullName>
        <shortName>GDH 1</shortName>
        <ecNumber evidence="7">1.4.1.3</ecNumber>
    </recommendedName>
</protein>